<sequence length="325" mass="35008">MPRPGRNTYSDQKPPYSYISLTAMAIQSSPEKMLPLSEIYKFIMDRFPYYRENTQRWQNSLRHNLSFNDCFIKIPRRPDQPGKGSFWALHPSCGDMFENGSFLRRRKRFKVLKSDHLAPSKPADAAQYLQQQAKLRLSALAASGTHLPQMPAAAYNLGGVAQPSGFKHPFAIENIIAREYKMPGGLAFSAMQPVPAAYPLPNQLTTMGSSLGTGWPHVYGSAGMIDSATPISMTSGDYSAYGVPLKPLCHAAGQTLPAIPVPIKPTPAAVPALPALPAPIPTLLSNSPPSLSPTSSQTATSQSSPATPSETLTSPASALHSVAVH</sequence>
<keyword id="KW-0238">DNA-binding</keyword>
<keyword id="KW-0539">Nucleus</keyword>
<keyword id="KW-1185">Reference proteome</keyword>
<keyword id="KW-0804">Transcription</keyword>
<keyword id="KW-0805">Transcription regulation</keyword>
<accession>Q64732</accession>
<accession>O08753</accession>
<accession>Q2M2M4</accession>
<proteinExistence type="evidence at transcript level"/>
<feature type="chain" id="PRO_0000091804" description="Forkhead box protein B1">
    <location>
        <begin position="1"/>
        <end position="325"/>
    </location>
</feature>
<feature type="DNA-binding region" description="Fork-head" evidence="1">
    <location>
        <begin position="12"/>
        <end position="103"/>
    </location>
</feature>
<feature type="region of interest" description="Disordered" evidence="2">
    <location>
        <begin position="284"/>
        <end position="325"/>
    </location>
</feature>
<feature type="compositionally biased region" description="Low complexity" evidence="2">
    <location>
        <begin position="284"/>
        <end position="309"/>
    </location>
</feature>
<feature type="sequence conflict" description="In Ref. 4; AAD12223." evidence="7" ref="4">
    <original>HNLSFN</original>
    <variation>PLTVRH</variation>
    <location>
        <begin position="63"/>
        <end position="68"/>
    </location>
</feature>
<feature type="sequence conflict" description="In Ref. 1; CAA63336." evidence="7" ref="1">
    <location>
        <position position="125"/>
    </location>
</feature>
<organism>
    <name type="scientific">Mus musculus</name>
    <name type="common">Mouse</name>
    <dbReference type="NCBI Taxonomy" id="10090"/>
    <lineage>
        <taxon>Eukaryota</taxon>
        <taxon>Metazoa</taxon>
        <taxon>Chordata</taxon>
        <taxon>Craniata</taxon>
        <taxon>Vertebrata</taxon>
        <taxon>Euteleostomi</taxon>
        <taxon>Mammalia</taxon>
        <taxon>Eutheria</taxon>
        <taxon>Euarchontoglires</taxon>
        <taxon>Glires</taxon>
        <taxon>Rodentia</taxon>
        <taxon>Myomorpha</taxon>
        <taxon>Muroidea</taxon>
        <taxon>Muridae</taxon>
        <taxon>Murinae</taxon>
        <taxon>Mus</taxon>
        <taxon>Mus</taxon>
    </lineage>
</organism>
<reference key="1">
    <citation type="journal article" date="1996" name="Mech. Dev.">
        <title>Expression of the winged helix genes fkh-4 and fkh-5 defines domains in the central nervous system.</title>
        <authorList>
            <person name="Kaestner K.H."/>
            <person name="Schuetz G."/>
            <person name="Monaghan A.P."/>
        </authorList>
    </citation>
    <scope>NUCLEOTIDE SEQUENCE [MRNA]</scope>
</reference>
<reference key="2">
    <citation type="submission" date="1997-02" db="EMBL/GenBank/DDBJ databases">
        <title>A winged helix gene expressed in thymocytes.</title>
        <authorList>
            <person name="Li S.C."/>
            <person name="Lai E."/>
        </authorList>
    </citation>
    <scope>NUCLEOTIDE SEQUENCE [MRNA]</scope>
    <source>
        <strain>C57BL/6 X CBA</strain>
        <tissue>Thymocyte</tissue>
    </source>
</reference>
<reference key="3">
    <citation type="journal article" date="2004" name="Genome Res.">
        <title>The status, quality, and expansion of the NIH full-length cDNA project: the Mammalian Gene Collection (MGC).</title>
        <authorList>
            <consortium name="The MGC Project Team"/>
        </authorList>
    </citation>
    <scope>NUCLEOTIDE SEQUENCE [LARGE SCALE MRNA]</scope>
</reference>
<reference key="4">
    <citation type="journal article" date="1993" name="Development">
        <title>The formation and maintenance of the definitive endoderm lineage in the mouse: involvement of HNF3/forkhead proteins.</title>
        <authorList>
            <person name="Ang S.-L."/>
            <person name="Wierda A."/>
            <person name="Wong D."/>
            <person name="Stevens K.A."/>
            <person name="Cascio S."/>
            <person name="Rossant J."/>
            <person name="Zaret K.S."/>
        </authorList>
    </citation>
    <scope>NUCLEOTIDE SEQUENCE [MRNA] OF 1-68</scope>
</reference>
<reference key="5">
    <citation type="journal article" date="1993" name="Proc. Natl. Acad. Sci. U.S.A.">
        <title>Six members of the mouse forkhead gene family are developmentally regulated.</title>
        <authorList>
            <person name="Kaestner K.H."/>
            <person name="Lee K.H."/>
            <person name="Schloendorff J."/>
            <person name="Hiemisch H."/>
            <person name="Monaghan A.P."/>
            <person name="Schuetz G."/>
        </authorList>
    </citation>
    <scope>NUCLEOTIDE SEQUENCE [GENOMIC DNA] OF 4-114</scope>
    <source>
        <strain>129</strain>
    </source>
</reference>
<reference key="6">
    <citation type="journal article" date="2001" name="Genesis">
        <title>The winged helix gene, Foxb1, controls development of mammary glands and regions of the CNS that regulate the milk-ejection reflex.</title>
        <authorList>
            <person name="Kloetzli J.M."/>
            <person name="Fontaine-Glover I.A."/>
            <person name="Brown E.R."/>
            <person name="Kuo M."/>
            <person name="Labosky P.A."/>
        </authorList>
    </citation>
    <scope>FUNCTION</scope>
    <scope>TISSUE SPECIFICITY</scope>
    <scope>DISRUPTION PHENOTYPE</scope>
</reference>
<reference key="7">
    <citation type="journal article" date="2005" name="Eur. J. Neurosci.">
        <title>Genetic ablation of the mammillary bodies in the Foxb1 mutant mouse leads to selective deficit of spatial working memory.</title>
        <authorList>
            <person name="Radyushkin K."/>
            <person name="Anokhin K."/>
            <person name="Meyer B.I."/>
            <person name="Jiang Q."/>
            <person name="Alvarez-Bolado G."/>
            <person name="Gruss P."/>
        </authorList>
    </citation>
    <scope>DISRUPTION PHENOTYPE</scope>
    <scope>FUNCTION</scope>
    <scope>TISSUE SPECIFICITY</scope>
</reference>
<reference key="8">
    <citation type="journal article" date="2016" name="J. Comp. Neurol.">
        <title>The Foxb1-expressing neurons of the ventrolateral hypothalamic parvafox nucleus project to defensive circuits.</title>
        <authorList>
            <person name="Bilella A."/>
            <person name="Alvarez-Bolado G."/>
            <person name="Celio M.R."/>
        </authorList>
    </citation>
    <scope>TISSUE SPECIFICITY</scope>
    <scope>SUBCELLULAR LOCATION</scope>
</reference>
<reference key="9">
    <citation type="journal article" date="2017" name="Front. Neuroanat.">
        <title>Foxb1 Regulates Negatively the Proliferation of Oligodendrocyte Progenitors.</title>
        <authorList>
            <person name="Zhang Y."/>
            <person name="Hoxha E."/>
            <person name="Zhao T."/>
            <person name="Zhou X."/>
            <person name="Alvarez-Bolado G."/>
        </authorList>
    </citation>
    <scope>FUNCTION</scope>
    <scope>SUBCELLULAR LOCATION</scope>
    <scope>TISSUE SPECIFICITY</scope>
    <scope>DEVELOPMENTAL STAGE</scope>
</reference>
<comment type="function">
    <text evidence="3 4 6">Transcription factor expressed by neural progenitor cells in specific regions of the embryonic neuroepithelium (PubMed:15654859, PubMed:28725186). Essential for the mammillary nuclei maintenance (PubMed:15654859). Negatively regulates the proliferation of oligodendrocyte progenitors and promotes oligodendrocyte maturation (PubMed:28725186). Also expressed in mammary glands, plays a role in lactation, controls development of mammary glands and the inferior colliculi of the midbrain in the central nervous system that regulates the milk-ejection reflex (PubMed:11170346).</text>
</comment>
<comment type="subcellular location">
    <subcellularLocation>
        <location evidence="5">Nucleus</location>
    </subcellularLocation>
</comment>
<comment type="tissue specificity">
    <text evidence="3 4 5 6">Expressed widespread in the early developing ventricular zone of the neural tube and later restricted to areas of the spinal cord, hindbrain, thalamus and hypothalamus (PubMed:11170346, PubMed:15654859, PubMed:27292133, PubMed:28725186). Expressed in epithelial cells of developing and adult mammary glands (PubMed:11170346).</text>
</comment>
<comment type="developmental stage">
    <text evidence="6">Expressed in oligodendrocyte-generating regions of the embryonic hindbrain.</text>
</comment>
<comment type="disruption phenotype">
    <text evidence="3 4">Mutants suffer perinatal degeneration of the medial and most of the lateral mammillary nuclei, as well as of the mammillothalamic bundle. Mutants show no deficits in hippocampal-dependent tasks as contextual fear conditioning and social transmission of food preference. They have a highly specific memory deficit, restricted to the performance of spatial working memory tasks with no impairment of spatial reference memory (PubMed:15654859). Female mutants have lactation defects with mammary glands with incomplete lobuloavelor development and morphological defects in the inferior colliculi of the midbrain (PubMed:11170346).</text>
</comment>
<evidence type="ECO:0000255" key="1">
    <source>
        <dbReference type="PROSITE-ProRule" id="PRU00089"/>
    </source>
</evidence>
<evidence type="ECO:0000256" key="2">
    <source>
        <dbReference type="SAM" id="MobiDB-lite"/>
    </source>
</evidence>
<evidence type="ECO:0000269" key="3">
    <source>
    </source>
</evidence>
<evidence type="ECO:0000269" key="4">
    <source>
    </source>
</evidence>
<evidence type="ECO:0000269" key="5">
    <source>
    </source>
</evidence>
<evidence type="ECO:0000269" key="6">
    <source>
    </source>
</evidence>
<evidence type="ECO:0000305" key="7"/>
<dbReference type="EMBL" id="X92592">
    <property type="protein sequence ID" value="CAA63336.1"/>
    <property type="molecule type" value="mRNA"/>
</dbReference>
<dbReference type="EMBL" id="U90538">
    <property type="protein sequence ID" value="AAB57686.1"/>
    <property type="molecule type" value="mRNA"/>
</dbReference>
<dbReference type="EMBL" id="BC111908">
    <property type="protein sequence ID" value="AAI11909.1"/>
    <property type="molecule type" value="mRNA"/>
</dbReference>
<dbReference type="EMBL" id="U04198">
    <property type="protein sequence ID" value="AAD12223.1"/>
    <property type="molecule type" value="mRNA"/>
</dbReference>
<dbReference type="EMBL" id="X71943">
    <property type="protein sequence ID" value="CAA50745.1"/>
    <property type="molecule type" value="Genomic_DNA"/>
</dbReference>
<dbReference type="CCDS" id="CCDS40677.1"/>
<dbReference type="PIR" id="E47746">
    <property type="entry name" value="E47746"/>
</dbReference>
<dbReference type="RefSeq" id="NP_071773.2">
    <property type="nucleotide sequence ID" value="NM_022378.3"/>
</dbReference>
<dbReference type="SMR" id="Q64732"/>
<dbReference type="BioGRID" id="211052">
    <property type="interactions" value="1"/>
</dbReference>
<dbReference type="FunCoup" id="Q64732">
    <property type="interactions" value="1085"/>
</dbReference>
<dbReference type="IntAct" id="Q64732">
    <property type="interactions" value="1"/>
</dbReference>
<dbReference type="STRING" id="10090.ENSMUSP00000096197"/>
<dbReference type="GlyGen" id="Q64732">
    <property type="glycosylation" value="2 sites"/>
</dbReference>
<dbReference type="PhosphoSitePlus" id="Q64732"/>
<dbReference type="PaxDb" id="10090-ENSMUSP00000096197"/>
<dbReference type="Antibodypedia" id="12956">
    <property type="antibodies" value="154 antibodies from 32 providers"/>
</dbReference>
<dbReference type="DNASU" id="64290"/>
<dbReference type="Ensembl" id="ENSMUST00000071281.5">
    <property type="protein sequence ID" value="ENSMUSP00000096197.3"/>
    <property type="gene ID" value="ENSMUSG00000059246.5"/>
</dbReference>
<dbReference type="GeneID" id="64290"/>
<dbReference type="KEGG" id="mmu:64290"/>
<dbReference type="UCSC" id="uc012gwj.1">
    <property type="organism name" value="mouse"/>
</dbReference>
<dbReference type="AGR" id="MGI:1927549"/>
<dbReference type="CTD" id="27023"/>
<dbReference type="MGI" id="MGI:1927549">
    <property type="gene designation" value="Foxb1"/>
</dbReference>
<dbReference type="VEuPathDB" id="HostDB:ENSMUSG00000059246"/>
<dbReference type="eggNOG" id="KOG3562">
    <property type="taxonomic scope" value="Eukaryota"/>
</dbReference>
<dbReference type="GeneTree" id="ENSGT00940000160522"/>
<dbReference type="HOGENOM" id="CLU_040357_2_0_1"/>
<dbReference type="InParanoid" id="Q64732"/>
<dbReference type="OMA" id="MYSTSVI"/>
<dbReference type="OrthoDB" id="5954824at2759"/>
<dbReference type="PhylomeDB" id="Q64732"/>
<dbReference type="TreeFam" id="TF350628"/>
<dbReference type="BioGRID-ORCS" id="64290">
    <property type="hits" value="4 hits in 79 CRISPR screens"/>
</dbReference>
<dbReference type="PRO" id="PR:Q64732"/>
<dbReference type="Proteomes" id="UP000000589">
    <property type="component" value="Chromosome 9"/>
</dbReference>
<dbReference type="RNAct" id="Q64732">
    <property type="molecule type" value="protein"/>
</dbReference>
<dbReference type="Bgee" id="ENSMUSG00000059246">
    <property type="expression patterns" value="Expressed in embryonic post-anal tail and 51 other cell types or tissues"/>
</dbReference>
<dbReference type="GO" id="GO:0005634">
    <property type="term" value="C:nucleus"/>
    <property type="evidence" value="ECO:0000314"/>
    <property type="project" value="MGI"/>
</dbReference>
<dbReference type="GO" id="GO:0003700">
    <property type="term" value="F:DNA-binding transcription factor activity"/>
    <property type="evidence" value="ECO:0007669"/>
    <property type="project" value="InterPro"/>
</dbReference>
<dbReference type="GO" id="GO:0043565">
    <property type="term" value="F:sequence-specific DNA binding"/>
    <property type="evidence" value="ECO:0000314"/>
    <property type="project" value="MGI"/>
</dbReference>
<dbReference type="GO" id="GO:1990837">
    <property type="term" value="F:sequence-specific double-stranded DNA binding"/>
    <property type="evidence" value="ECO:0007669"/>
    <property type="project" value="Ensembl"/>
</dbReference>
<dbReference type="GO" id="GO:0007412">
    <property type="term" value="P:axon target recognition"/>
    <property type="evidence" value="ECO:0000315"/>
    <property type="project" value="UniProtKB"/>
</dbReference>
<dbReference type="GO" id="GO:0061381">
    <property type="term" value="P:cell migration in diencephalon"/>
    <property type="evidence" value="ECO:0000315"/>
    <property type="project" value="UniProtKB"/>
</dbReference>
<dbReference type="GO" id="GO:0061030">
    <property type="term" value="P:epithelial cell differentiation involved in mammary gland alveolus development"/>
    <property type="evidence" value="ECO:0000315"/>
    <property type="project" value="UniProtKB"/>
</dbReference>
<dbReference type="GO" id="GO:0033504">
    <property type="term" value="P:floor plate development"/>
    <property type="evidence" value="ECO:0000315"/>
    <property type="project" value="UniProtKB"/>
</dbReference>
<dbReference type="GO" id="GO:0021855">
    <property type="term" value="P:hypothalamus cell migration"/>
    <property type="evidence" value="ECO:0000315"/>
    <property type="project" value="UniProtKB"/>
</dbReference>
<dbReference type="GO" id="GO:0061379">
    <property type="term" value="P:inferior colliculus development"/>
    <property type="evidence" value="ECO:0000315"/>
    <property type="project" value="UniProtKB"/>
</dbReference>
<dbReference type="GO" id="GO:0007595">
    <property type="term" value="P:lactation"/>
    <property type="evidence" value="ECO:0000315"/>
    <property type="project" value="UniProtKB"/>
</dbReference>
<dbReference type="GO" id="GO:0061377">
    <property type="term" value="P:mammary gland lobule development"/>
    <property type="evidence" value="ECO:0000315"/>
    <property type="project" value="UniProtKB"/>
</dbReference>
<dbReference type="GO" id="GO:0021767">
    <property type="term" value="P:mammillary body development"/>
    <property type="evidence" value="ECO:0000315"/>
    <property type="project" value="UniProtKB"/>
</dbReference>
<dbReference type="GO" id="GO:0061374">
    <property type="term" value="P:mammillothalamic axonal tract development"/>
    <property type="evidence" value="ECO:0000315"/>
    <property type="project" value="UniProtKB"/>
</dbReference>
<dbReference type="GO" id="GO:0030901">
    <property type="term" value="P:midbrain development"/>
    <property type="evidence" value="ECO:0000315"/>
    <property type="project" value="UniProtKB"/>
</dbReference>
<dbReference type="GO" id="GO:0043524">
    <property type="term" value="P:negative regulation of neuron apoptotic process"/>
    <property type="evidence" value="ECO:0000315"/>
    <property type="project" value="UniProtKB"/>
</dbReference>
<dbReference type="GO" id="GO:0001756">
    <property type="term" value="P:somitogenesis"/>
    <property type="evidence" value="ECO:0000315"/>
    <property type="project" value="UniProtKB"/>
</dbReference>
<dbReference type="GO" id="GO:0021510">
    <property type="term" value="P:spinal cord development"/>
    <property type="evidence" value="ECO:0000270"/>
    <property type="project" value="UniProtKB"/>
</dbReference>
<dbReference type="GO" id="GO:0022029">
    <property type="term" value="P:telencephalon cell migration"/>
    <property type="evidence" value="ECO:0000315"/>
    <property type="project" value="UniProtKB"/>
</dbReference>
<dbReference type="GO" id="GO:0021794">
    <property type="term" value="P:thalamus development"/>
    <property type="evidence" value="ECO:0000270"/>
    <property type="project" value="UniProtKB"/>
</dbReference>
<dbReference type="GO" id="GO:0001655">
    <property type="term" value="P:urogenital system development"/>
    <property type="evidence" value="ECO:0000270"/>
    <property type="project" value="UniProtKB"/>
</dbReference>
<dbReference type="GO" id="GO:0008542">
    <property type="term" value="P:visual learning"/>
    <property type="evidence" value="ECO:0000315"/>
    <property type="project" value="UniProtKB"/>
</dbReference>
<dbReference type="CDD" id="cd20043">
    <property type="entry name" value="FH_FOXB2"/>
    <property type="match status" value="1"/>
</dbReference>
<dbReference type="FunFam" id="1.10.10.10:FF:000082">
    <property type="entry name" value="forkhead box protein B2"/>
    <property type="match status" value="1"/>
</dbReference>
<dbReference type="Gene3D" id="1.10.10.10">
    <property type="entry name" value="Winged helix-like DNA-binding domain superfamily/Winged helix DNA-binding domain"/>
    <property type="match status" value="1"/>
</dbReference>
<dbReference type="InterPro" id="IPR001766">
    <property type="entry name" value="Fork_head_dom"/>
</dbReference>
<dbReference type="InterPro" id="IPR050211">
    <property type="entry name" value="FOX_domain-containing"/>
</dbReference>
<dbReference type="InterPro" id="IPR047389">
    <property type="entry name" value="FOXB1_B2_FH"/>
</dbReference>
<dbReference type="InterPro" id="IPR018122">
    <property type="entry name" value="TF_fork_head_CS_1"/>
</dbReference>
<dbReference type="InterPro" id="IPR030456">
    <property type="entry name" value="TF_fork_head_CS_2"/>
</dbReference>
<dbReference type="InterPro" id="IPR036388">
    <property type="entry name" value="WH-like_DNA-bd_sf"/>
</dbReference>
<dbReference type="InterPro" id="IPR036390">
    <property type="entry name" value="WH_DNA-bd_sf"/>
</dbReference>
<dbReference type="PANTHER" id="PTHR11829">
    <property type="entry name" value="FORKHEAD BOX PROTEIN"/>
    <property type="match status" value="1"/>
</dbReference>
<dbReference type="PANTHER" id="PTHR11829:SF209">
    <property type="entry name" value="FORKHEAD BOX PROTEIN B1"/>
    <property type="match status" value="1"/>
</dbReference>
<dbReference type="Pfam" id="PF00250">
    <property type="entry name" value="Forkhead"/>
    <property type="match status" value="1"/>
</dbReference>
<dbReference type="PRINTS" id="PR00053">
    <property type="entry name" value="FORKHEAD"/>
</dbReference>
<dbReference type="SMART" id="SM00339">
    <property type="entry name" value="FH"/>
    <property type="match status" value="1"/>
</dbReference>
<dbReference type="SUPFAM" id="SSF46785">
    <property type="entry name" value="Winged helix' DNA-binding domain"/>
    <property type="match status" value="1"/>
</dbReference>
<dbReference type="PROSITE" id="PS00657">
    <property type="entry name" value="FORK_HEAD_1"/>
    <property type="match status" value="1"/>
</dbReference>
<dbReference type="PROSITE" id="PS00658">
    <property type="entry name" value="FORK_HEAD_2"/>
    <property type="match status" value="1"/>
</dbReference>
<dbReference type="PROSITE" id="PS50039">
    <property type="entry name" value="FORK_HEAD_3"/>
    <property type="match status" value="1"/>
</dbReference>
<gene>
    <name type="primary">Foxb1</name>
    <name type="synonym">Fkh5</name>
    <name type="synonym">Foxb1a</name>
    <name type="synonym">Foxb1b</name>
    <name type="synonym">Mf3</name>
</gene>
<name>FOXB1_MOUSE</name>
<protein>
    <recommendedName>
        <fullName>Forkhead box protein B1</fullName>
    </recommendedName>
    <alternativeName>
        <fullName>Transcription factor FKH-5</fullName>
    </alternativeName>
</protein>